<dbReference type="EMBL" id="CP001043">
    <property type="protein sequence ID" value="ACC72266.1"/>
    <property type="molecule type" value="Genomic_DNA"/>
</dbReference>
<dbReference type="RefSeq" id="WP_012402441.1">
    <property type="nucleotide sequence ID" value="NC_010622.1"/>
</dbReference>
<dbReference type="SMR" id="B2JJR8"/>
<dbReference type="STRING" id="391038.Bphy_3098"/>
<dbReference type="KEGG" id="bph:Bphy_3098"/>
<dbReference type="eggNOG" id="COG0706">
    <property type="taxonomic scope" value="Bacteria"/>
</dbReference>
<dbReference type="HOGENOM" id="CLU_016535_3_0_4"/>
<dbReference type="OrthoDB" id="9780552at2"/>
<dbReference type="Proteomes" id="UP000001192">
    <property type="component" value="Chromosome 1"/>
</dbReference>
<dbReference type="GO" id="GO:0005886">
    <property type="term" value="C:plasma membrane"/>
    <property type="evidence" value="ECO:0007669"/>
    <property type="project" value="UniProtKB-SubCell"/>
</dbReference>
<dbReference type="GO" id="GO:0032977">
    <property type="term" value="F:membrane insertase activity"/>
    <property type="evidence" value="ECO:0007669"/>
    <property type="project" value="InterPro"/>
</dbReference>
<dbReference type="GO" id="GO:0051205">
    <property type="term" value="P:protein insertion into membrane"/>
    <property type="evidence" value="ECO:0007669"/>
    <property type="project" value="TreeGrafter"/>
</dbReference>
<dbReference type="GO" id="GO:0015031">
    <property type="term" value="P:protein transport"/>
    <property type="evidence" value="ECO:0007669"/>
    <property type="project" value="UniProtKB-KW"/>
</dbReference>
<dbReference type="CDD" id="cd20070">
    <property type="entry name" value="5TM_YidC_Alb3"/>
    <property type="match status" value="1"/>
</dbReference>
<dbReference type="CDD" id="cd19961">
    <property type="entry name" value="EcYidC-like_peri"/>
    <property type="match status" value="1"/>
</dbReference>
<dbReference type="Gene3D" id="2.70.98.90">
    <property type="match status" value="1"/>
</dbReference>
<dbReference type="HAMAP" id="MF_01810">
    <property type="entry name" value="YidC_type1"/>
    <property type="match status" value="1"/>
</dbReference>
<dbReference type="InterPro" id="IPR019998">
    <property type="entry name" value="Membr_insert_YidC"/>
</dbReference>
<dbReference type="InterPro" id="IPR028053">
    <property type="entry name" value="Membr_insert_YidC_N"/>
</dbReference>
<dbReference type="InterPro" id="IPR001708">
    <property type="entry name" value="YidC/ALB3/OXA1/COX18"/>
</dbReference>
<dbReference type="InterPro" id="IPR028055">
    <property type="entry name" value="YidC/Oxa/ALB_C"/>
</dbReference>
<dbReference type="InterPro" id="IPR047196">
    <property type="entry name" value="YidC_ALB_C"/>
</dbReference>
<dbReference type="InterPro" id="IPR038221">
    <property type="entry name" value="YidC_periplasmic_sf"/>
</dbReference>
<dbReference type="NCBIfam" id="NF002352">
    <property type="entry name" value="PRK01318.1-3"/>
    <property type="match status" value="1"/>
</dbReference>
<dbReference type="NCBIfam" id="NF002353">
    <property type="entry name" value="PRK01318.1-4"/>
    <property type="match status" value="1"/>
</dbReference>
<dbReference type="NCBIfam" id="TIGR03593">
    <property type="entry name" value="yidC_nterm"/>
    <property type="match status" value="1"/>
</dbReference>
<dbReference type="NCBIfam" id="TIGR03592">
    <property type="entry name" value="yidC_oxa1_cterm"/>
    <property type="match status" value="1"/>
</dbReference>
<dbReference type="PANTHER" id="PTHR12428:SF65">
    <property type="entry name" value="CYTOCHROME C OXIDASE ASSEMBLY PROTEIN COX18, MITOCHONDRIAL"/>
    <property type="match status" value="1"/>
</dbReference>
<dbReference type="PANTHER" id="PTHR12428">
    <property type="entry name" value="OXA1"/>
    <property type="match status" value="1"/>
</dbReference>
<dbReference type="Pfam" id="PF02096">
    <property type="entry name" value="60KD_IMP"/>
    <property type="match status" value="1"/>
</dbReference>
<dbReference type="Pfam" id="PF14849">
    <property type="entry name" value="YidC_periplas"/>
    <property type="match status" value="1"/>
</dbReference>
<dbReference type="PRINTS" id="PR00701">
    <property type="entry name" value="60KDINNERMP"/>
</dbReference>
<dbReference type="PRINTS" id="PR01900">
    <property type="entry name" value="YIDCPROTEIN"/>
</dbReference>
<evidence type="ECO:0000255" key="1">
    <source>
        <dbReference type="HAMAP-Rule" id="MF_01810"/>
    </source>
</evidence>
<evidence type="ECO:0000256" key="2">
    <source>
        <dbReference type="SAM" id="MobiDB-lite"/>
    </source>
</evidence>
<keyword id="KW-0997">Cell inner membrane</keyword>
<keyword id="KW-1003">Cell membrane</keyword>
<keyword id="KW-0143">Chaperone</keyword>
<keyword id="KW-0472">Membrane</keyword>
<keyword id="KW-0653">Protein transport</keyword>
<keyword id="KW-1185">Reference proteome</keyword>
<keyword id="KW-0812">Transmembrane</keyword>
<keyword id="KW-1133">Transmembrane helix</keyword>
<keyword id="KW-0813">Transport</keyword>
<proteinExistence type="inferred from homology"/>
<organism>
    <name type="scientific">Paraburkholderia phymatum (strain DSM 17167 / CIP 108236 / LMG 21445 / STM815)</name>
    <name type="common">Burkholderia phymatum</name>
    <dbReference type="NCBI Taxonomy" id="391038"/>
    <lineage>
        <taxon>Bacteria</taxon>
        <taxon>Pseudomonadati</taxon>
        <taxon>Pseudomonadota</taxon>
        <taxon>Betaproteobacteria</taxon>
        <taxon>Burkholderiales</taxon>
        <taxon>Burkholderiaceae</taxon>
        <taxon>Paraburkholderia</taxon>
    </lineage>
</organism>
<gene>
    <name evidence="1" type="primary">yidC</name>
    <name type="ordered locus">Bphy_3098</name>
</gene>
<protein>
    <recommendedName>
        <fullName evidence="1">Membrane protein insertase YidC</fullName>
    </recommendedName>
    <alternativeName>
        <fullName evidence="1">Foldase YidC</fullName>
    </alternativeName>
    <alternativeName>
        <fullName evidence="1">Membrane integrase YidC</fullName>
    </alternativeName>
    <alternativeName>
        <fullName evidence="1">Membrane protein YidC</fullName>
    </alternativeName>
</protein>
<feature type="chain" id="PRO_1000187643" description="Membrane protein insertase YidC">
    <location>
        <begin position="1"/>
        <end position="550"/>
    </location>
</feature>
<feature type="transmembrane region" description="Helical" evidence="1">
    <location>
        <begin position="3"/>
        <end position="23"/>
    </location>
</feature>
<feature type="transmembrane region" description="Helical" evidence="1">
    <location>
        <begin position="363"/>
        <end position="383"/>
    </location>
</feature>
<feature type="transmembrane region" description="Helical" evidence="1">
    <location>
        <begin position="429"/>
        <end position="449"/>
    </location>
</feature>
<feature type="transmembrane region" description="Helical" evidence="1">
    <location>
        <begin position="472"/>
        <end position="492"/>
    </location>
</feature>
<feature type="transmembrane region" description="Helical" evidence="1">
    <location>
        <begin position="503"/>
        <end position="523"/>
    </location>
</feature>
<feature type="region of interest" description="Disordered" evidence="2">
    <location>
        <begin position="34"/>
        <end position="73"/>
    </location>
</feature>
<feature type="compositionally biased region" description="Low complexity" evidence="2">
    <location>
        <begin position="35"/>
        <end position="73"/>
    </location>
</feature>
<reference key="1">
    <citation type="journal article" date="2014" name="Stand. Genomic Sci.">
        <title>Complete genome sequence of Burkholderia phymatum STM815(T), a broad host range and efficient nitrogen-fixing symbiont of Mimosa species.</title>
        <authorList>
            <person name="Moulin L."/>
            <person name="Klonowska A."/>
            <person name="Caroline B."/>
            <person name="Booth K."/>
            <person name="Vriezen J.A."/>
            <person name="Melkonian R."/>
            <person name="James E.K."/>
            <person name="Young J.P."/>
            <person name="Bena G."/>
            <person name="Hauser L."/>
            <person name="Land M."/>
            <person name="Kyrpides N."/>
            <person name="Bruce D."/>
            <person name="Chain P."/>
            <person name="Copeland A."/>
            <person name="Pitluck S."/>
            <person name="Woyke T."/>
            <person name="Lizotte-Waniewski M."/>
            <person name="Bristow J."/>
            <person name="Riley M."/>
        </authorList>
    </citation>
    <scope>NUCLEOTIDE SEQUENCE [LARGE SCALE GENOMIC DNA]</scope>
    <source>
        <strain>DSM 17167 / CIP 108236 / LMG 21445 / STM815</strain>
    </source>
</reference>
<name>YIDC_PARP8</name>
<comment type="function">
    <text evidence="1">Required for the insertion and/or proper folding and/or complex formation of integral membrane proteins into the membrane. Involved in integration of membrane proteins that insert both dependently and independently of the Sec translocase complex, as well as at least some lipoproteins. Aids folding of multispanning membrane proteins.</text>
</comment>
<comment type="subunit">
    <text evidence="1">Interacts with the Sec translocase complex via SecD. Specifically interacts with transmembrane segments of nascent integral membrane proteins during membrane integration.</text>
</comment>
<comment type="subcellular location">
    <subcellularLocation>
        <location evidence="1">Cell inner membrane</location>
        <topology evidence="1">Multi-pass membrane protein</topology>
    </subcellularLocation>
</comment>
<comment type="similarity">
    <text evidence="1">Belongs to the OXA1/ALB3/YidC family. Type 1 subfamily.</text>
</comment>
<sequence length="550" mass="61344">MDIKRTVLWVIFFMSAVMLFDNWQRDHGRPSMFFPSATQTKTAAPAAPGSSTTASQPTDLPQTTAAAPGSTTPAAQQAQLVSFSTDVYRGQIDTRGGTLSKLTLVKPGEGKQPDQVITLFDHTADHTYLARTGLLGGDFPNHTDVFTPVAGQATDMTGNTLTLSFQSPEKGGLKVVKTYTFTRGSYVINVDTKIQNVGTAPVKPTAYMELVRDSQPVETPRFSHTFIGPAVYTEQHHFQKLTFGDIDKNKQDYATSADNGWVAMVQHYFASAWIPQQGAKRDIYVEKIDPSLYRVGVKQPLQTIAPGQTIDVSARLFAGPEEERMLEGIAPGLELVKDYGWVTIIAKPLFWLLEKIHGYVGNWGWAIVLLTLLIKAVFFPLSAASYKSMARMKEITPRMQALRERFKSDPQKMNAALMELYKTEKVNPFGGCLPVVIQIPVFISLYWVLLSSVEMRGAPWILWIHDLSQQDPYFILPVLMAVSMFVQTKLNPTPPDPVQAKMMMFMPIAFSVMFFFFPAGLVLYYVVNNVLSIAQQYYITRMMGQKKKAA</sequence>
<accession>B2JJR8</accession>